<organismHost>
    <name type="scientific">Cestrum parqui</name>
    <dbReference type="NCBI Taxonomy" id="142762"/>
</organismHost>
<keyword id="KW-0175">Coiled coil</keyword>
<keyword id="KW-1031">Host cell junction</keyword>
<keyword id="KW-1185">Reference proteome</keyword>
<keyword id="KW-0813">Transport</keyword>
<keyword id="KW-0916">Viral movement protein</keyword>
<name>MVP_CYLCV</name>
<proteinExistence type="inferred from homology"/>
<accession>Q7TD13</accession>
<protein>
    <recommendedName>
        <fullName>Putative movement protein</fullName>
        <shortName>Mov</shortName>
    </recommendedName>
    <alternativeName>
        <fullName>Cell-to-cell transport protein</fullName>
    </alternativeName>
</protein>
<dbReference type="EMBL" id="AF364175">
    <property type="protein sequence ID" value="AAP78919.1"/>
    <property type="molecule type" value="Genomic_DNA"/>
</dbReference>
<dbReference type="RefSeq" id="NP_861411.1">
    <property type="nucleotide sequence ID" value="NC_004324.3"/>
</dbReference>
<dbReference type="KEGG" id="vg:1732958"/>
<dbReference type="OrthoDB" id="10370at10239"/>
<dbReference type="Proteomes" id="UP000007763">
    <property type="component" value="Genome"/>
</dbReference>
<dbReference type="GO" id="GO:0044219">
    <property type="term" value="C:host cell plasmodesma"/>
    <property type="evidence" value="ECO:0007669"/>
    <property type="project" value="UniProtKB-SubCell"/>
</dbReference>
<dbReference type="GO" id="GO:0046740">
    <property type="term" value="P:transport of virus in host, cell to cell"/>
    <property type="evidence" value="ECO:0007669"/>
    <property type="project" value="UniProtKB-KW"/>
</dbReference>
<dbReference type="InterPro" id="IPR051596">
    <property type="entry name" value="Caulimoviridae_Movement"/>
</dbReference>
<dbReference type="InterPro" id="IPR028919">
    <property type="entry name" value="Viral_movement"/>
</dbReference>
<dbReference type="PANTHER" id="PTHR47599">
    <property type="entry name" value="CELL-TO-CELL MOVEMENT PROTEIN"/>
    <property type="match status" value="1"/>
</dbReference>
<dbReference type="PANTHER" id="PTHR47599:SF3">
    <property type="entry name" value="CELL-TO-CELL MOVEMENT PROTEIN"/>
    <property type="match status" value="1"/>
</dbReference>
<dbReference type="Pfam" id="PF01107">
    <property type="entry name" value="MP"/>
    <property type="match status" value="1"/>
</dbReference>
<gene>
    <name type="ORF">ORF I</name>
</gene>
<reference key="1">
    <citation type="journal article" date="2003" name="J. Gen. Virol.">
        <title>Characterization of Cestrum yellow leaf curling virus: a new member of the family Caulimoviridae.</title>
        <authorList>
            <person name="Stavolone L."/>
            <person name="Ragozzino A."/>
            <person name="Hohn T."/>
        </authorList>
    </citation>
    <scope>NUCLEOTIDE SEQUENCE [GENOMIC DNA]</scope>
</reference>
<comment type="function">
    <text evidence="1">Transports viral genome to neighboring plant cells directly through plasmosdesmata, without any budding. The movement protein allows efficient cell to cell propagation, by bypassing the host cell wall barrier. Acts by forming tubules structures that increase the size exclusion limit (SEL) of plasmodesmata, thereby allowing viral ribonucleocapsids to spread directly to neighboring cells (By similarity).</text>
</comment>
<comment type="subunit">
    <text evidence="1">Homotrimer, through the coiled-coil domain. Interacts with VAP.</text>
</comment>
<comment type="subcellular location">
    <subcellularLocation>
        <location>Host cell junction</location>
        <location>Host plasmodesma</location>
    </subcellularLocation>
    <text>Assembles in tubules that are embedded within modified plasmodesmata.</text>
</comment>
<comment type="similarity">
    <text evidence="3">Belongs to the caulimoviridae movement protein family.</text>
</comment>
<sequence length="312" mass="35671">MDVLDYLDMSESSEKFHVSVLSEKDKFKIESADITLKEGDDFKRISTIRNIFDRKNVIFYGKYLSESFVKLETASGKFELPIVNIDHIYDQISKIRNQEKRKTLSCIHISTIQIVLKSTFLKGLDYPISLAITDERINNPKEKIIGIVHGNLATVTLKFSVHLGFAIPLTEEDLSRSISLTYKAYRNDLMNDQKQGFSITYAVSYALANSHHSIQFANKDRIYLDEIFKQVSFTEKPRPISPIKPNGLKFLKKKPSNLEDLIGVPRNHLSLQPPPLRVARKDSEESSSTSVPEIENLTKQVKDISSYLKDRL</sequence>
<evidence type="ECO:0000250" key="1"/>
<evidence type="ECO:0000256" key="2">
    <source>
        <dbReference type="SAM" id="MobiDB-lite"/>
    </source>
</evidence>
<evidence type="ECO:0000305" key="3"/>
<feature type="chain" id="PRO_0000317782" description="Putative movement protein">
    <location>
        <begin position="1"/>
        <end position="312"/>
    </location>
</feature>
<feature type="region of interest" description="Disordered" evidence="2">
    <location>
        <begin position="266"/>
        <end position="293"/>
    </location>
</feature>
<feature type="coiled-coil region" evidence="1">
    <location>
        <begin position="278"/>
        <end position="307"/>
    </location>
</feature>
<organism>
    <name type="scientific">Cestrum yellow leaf curling virus</name>
    <name type="common">CmYLCV</name>
    <dbReference type="NCBI Taxonomy" id="175814"/>
    <lineage>
        <taxon>Viruses</taxon>
        <taxon>Riboviria</taxon>
        <taxon>Pararnavirae</taxon>
        <taxon>Artverviricota</taxon>
        <taxon>Revtraviricetes</taxon>
        <taxon>Ortervirales</taxon>
        <taxon>Caulimoviridae</taxon>
        <taxon>Soymovirus</taxon>
        <taxon>Soymovirus crispocestri</taxon>
    </lineage>
</organism>